<sequence>MAAEFIKSCCRGCLYGETEKQKFSVDRDFKASASSSQNTIGIPPLTSVLVKPQVGCNEDYLLSKLPCDGKEVQFVVPRFKLSYIQPRTQGIPSHLDELEGSARASFGDQKTELCSSFYHGPSYDVYNPCYMYQHFSPDLSRRFLPHCETKQLYGSVCDLRTSKLPGSSGLSKSMLDLTTSSQRFIQRHDSFSSVPSSSSSRKNSQGSNRSLDTITLSGDERDLGRLNVKLFYNSSAEQIWITVLQCRDISWPSSYGDTPTISIKGILTLSKPVHFKSSAKEGSNAIEFMETFVFAIKLQNLQAVRLAFKIQTQTPKKKTIGECSLSLRTLSTQEMEYSLEIIAPSKISVCQAELELGTCFQAVNSRIQLQILEAQYLPSSSTPLTLSFFVKVGMFSSGELIYKKKTRLLKASSGRVKWGETMIFPLIQTEKEIVFLIKLYSRSSVRRKHFVGQLWISEDSNNIEAVNQWKETITNPEKVVIKWHKLNPS</sequence>
<dbReference type="EMBL" id="AB062282">
    <property type="protein sequence ID" value="BAB62893.1"/>
    <property type="molecule type" value="mRNA"/>
</dbReference>
<dbReference type="EMBL" id="AK016683">
    <property type="protein sequence ID" value="BAB30378.1"/>
    <property type="molecule type" value="mRNA"/>
</dbReference>
<dbReference type="EMBL" id="AK136558">
    <property type="protein sequence ID" value="BAE23043.1"/>
    <property type="molecule type" value="mRNA"/>
</dbReference>
<dbReference type="EMBL" id="CH466549">
    <property type="protein sequence ID" value="EDL18876.1"/>
    <property type="molecule type" value="Genomic_DNA"/>
</dbReference>
<dbReference type="EMBL" id="BC120793">
    <property type="protein sequence ID" value="AAI20794.1"/>
    <property type="molecule type" value="mRNA"/>
</dbReference>
<dbReference type="CCDS" id="CCDS36524.1"/>
<dbReference type="RefSeq" id="NP_001076445.1">
    <property type="nucleotide sequence ID" value="NM_001082976.2"/>
</dbReference>
<dbReference type="RefSeq" id="NP_083200.1">
    <property type="nucleotide sequence ID" value="NM_028924.3"/>
</dbReference>
<dbReference type="RefSeq" id="XP_006516364.1">
    <property type="nucleotide sequence ID" value="XM_006516301.5"/>
</dbReference>
<dbReference type="RefSeq" id="XP_006516366.1">
    <property type="nucleotide sequence ID" value="XM_006516303.4"/>
</dbReference>
<dbReference type="RefSeq" id="XP_011242493.1">
    <property type="nucleotide sequence ID" value="XM_011244191.3"/>
</dbReference>
<dbReference type="RefSeq" id="XP_011242494.1">
    <property type="nucleotide sequence ID" value="XM_011244192.2"/>
</dbReference>
<dbReference type="RefSeq" id="XP_017170706.1">
    <property type="nucleotide sequence ID" value="XM_017315217.3"/>
</dbReference>
<dbReference type="SMR" id="Q91XT6"/>
<dbReference type="FunCoup" id="Q91XT6">
    <property type="interactions" value="1315"/>
</dbReference>
<dbReference type="STRING" id="10090.ENSMUSP00000125288"/>
<dbReference type="iPTMnet" id="Q91XT6"/>
<dbReference type="PhosphoSitePlus" id="Q91XT6"/>
<dbReference type="PaxDb" id="10090-ENSMUSP00000125288"/>
<dbReference type="ProteomicsDB" id="262998"/>
<dbReference type="Antibodypedia" id="26667">
    <property type="antibodies" value="87 antibodies from 19 providers"/>
</dbReference>
<dbReference type="DNASU" id="74413"/>
<dbReference type="Ensembl" id="ENSMUST00000110047.9">
    <property type="protein sequence ID" value="ENSMUSP00000105674.3"/>
    <property type="gene ID" value="ENSMUSG00000021187.15"/>
</dbReference>
<dbReference type="Ensembl" id="ENSMUST00000160830.2">
    <property type="protein sequence ID" value="ENSMUSP00000124287.2"/>
    <property type="gene ID" value="ENSMUSG00000021187.15"/>
</dbReference>
<dbReference type="Ensembl" id="ENSMUST00000162735.8">
    <property type="protein sequence ID" value="ENSMUSP00000125288.2"/>
    <property type="gene ID" value="ENSMUSG00000021187.15"/>
</dbReference>
<dbReference type="GeneID" id="74413"/>
<dbReference type="KEGG" id="mmu:74413"/>
<dbReference type="UCSC" id="uc007otm.2">
    <property type="organism name" value="mouse"/>
</dbReference>
<dbReference type="AGR" id="MGI:1921663"/>
<dbReference type="CTD" id="123036"/>
<dbReference type="MGI" id="MGI:1921663">
    <property type="gene designation" value="Tc2n"/>
</dbReference>
<dbReference type="VEuPathDB" id="HostDB:ENSMUSG00000021187"/>
<dbReference type="eggNOG" id="KOG1028">
    <property type="taxonomic scope" value="Eukaryota"/>
</dbReference>
<dbReference type="GeneTree" id="ENSGT00390000009196"/>
<dbReference type="HOGENOM" id="CLU_043542_0_0_1"/>
<dbReference type="InParanoid" id="Q91XT6"/>
<dbReference type="OMA" id="QSSARCT"/>
<dbReference type="OrthoDB" id="9936710at2759"/>
<dbReference type="PhylomeDB" id="Q91XT6"/>
<dbReference type="TreeFam" id="TF317035"/>
<dbReference type="BioGRID-ORCS" id="74413">
    <property type="hits" value="1 hit in 75 CRISPR screens"/>
</dbReference>
<dbReference type="PRO" id="PR:Q91XT6"/>
<dbReference type="Proteomes" id="UP000000589">
    <property type="component" value="Chromosome 12"/>
</dbReference>
<dbReference type="RNAct" id="Q91XT6">
    <property type="molecule type" value="protein"/>
</dbReference>
<dbReference type="Bgee" id="ENSMUSG00000021187">
    <property type="expression patterns" value="Expressed in seminal vesicle and 99 other cell types or tissues"/>
</dbReference>
<dbReference type="ExpressionAtlas" id="Q91XT6">
    <property type="expression patterns" value="baseline and differential"/>
</dbReference>
<dbReference type="GO" id="GO:0005634">
    <property type="term" value="C:nucleus"/>
    <property type="evidence" value="ECO:0000314"/>
    <property type="project" value="MGI"/>
</dbReference>
<dbReference type="CDD" id="cd08684">
    <property type="entry name" value="C2A_Tac2-N"/>
    <property type="match status" value="1"/>
</dbReference>
<dbReference type="CDD" id="cd08692">
    <property type="entry name" value="C2B_Tac2-N"/>
    <property type="match status" value="1"/>
</dbReference>
<dbReference type="FunFam" id="2.60.40.150:FF:000154">
    <property type="entry name" value="tandem C2 domains nuclear protein"/>
    <property type="match status" value="1"/>
</dbReference>
<dbReference type="Gene3D" id="2.60.40.150">
    <property type="entry name" value="C2 domain"/>
    <property type="match status" value="2"/>
</dbReference>
<dbReference type="InterPro" id="IPR000008">
    <property type="entry name" value="C2_dom"/>
</dbReference>
<dbReference type="InterPro" id="IPR035892">
    <property type="entry name" value="C2_domain_sf"/>
</dbReference>
<dbReference type="InterPro" id="IPR037786">
    <property type="entry name" value="C2A_Tac2-N"/>
</dbReference>
<dbReference type="InterPro" id="IPR037788">
    <property type="entry name" value="C2B_Tac2-N"/>
</dbReference>
<dbReference type="InterPro" id="IPR030542">
    <property type="entry name" value="Tac2-N"/>
</dbReference>
<dbReference type="PANTHER" id="PTHR46887">
    <property type="entry name" value="TANDEM C2 DOMAINS NUCLEAR PROTEIN"/>
    <property type="match status" value="1"/>
</dbReference>
<dbReference type="PANTHER" id="PTHR46887:SF1">
    <property type="entry name" value="TANDEM C2 DOMAINS NUCLEAR PROTEIN"/>
    <property type="match status" value="1"/>
</dbReference>
<dbReference type="Pfam" id="PF00168">
    <property type="entry name" value="C2"/>
    <property type="match status" value="2"/>
</dbReference>
<dbReference type="SMART" id="SM00239">
    <property type="entry name" value="C2"/>
    <property type="match status" value="2"/>
</dbReference>
<dbReference type="SUPFAM" id="SSF49562">
    <property type="entry name" value="C2 domain (Calcium/lipid-binding domain, CaLB)"/>
    <property type="match status" value="2"/>
</dbReference>
<dbReference type="PROSITE" id="PS50004">
    <property type="entry name" value="C2"/>
    <property type="match status" value="2"/>
</dbReference>
<name>TAC2N_MOUSE</name>
<protein>
    <recommendedName>
        <fullName>Tandem C2 domains nuclear protein</fullName>
    </recommendedName>
    <alternativeName>
        <fullName>Membrane targeting tandem C2 domain-containing protein 1</fullName>
    </alternativeName>
    <alternativeName>
        <fullName>Tandem C2 protein in nucleus</fullName>
        <shortName>Tac2-N</shortName>
    </alternativeName>
</protein>
<organism>
    <name type="scientific">Mus musculus</name>
    <name type="common">Mouse</name>
    <dbReference type="NCBI Taxonomy" id="10090"/>
    <lineage>
        <taxon>Eukaryota</taxon>
        <taxon>Metazoa</taxon>
        <taxon>Chordata</taxon>
        <taxon>Craniata</taxon>
        <taxon>Vertebrata</taxon>
        <taxon>Euteleostomi</taxon>
        <taxon>Mammalia</taxon>
        <taxon>Eutheria</taxon>
        <taxon>Euarchontoglires</taxon>
        <taxon>Glires</taxon>
        <taxon>Rodentia</taxon>
        <taxon>Myomorpha</taxon>
        <taxon>Muroidea</taxon>
        <taxon>Muridae</taxon>
        <taxon>Murinae</taxon>
        <taxon>Mus</taxon>
        <taxon>Mus</taxon>
    </lineage>
</organism>
<gene>
    <name type="primary">Tc2n</name>
    <name type="synonym">Mtac2d1</name>
</gene>
<evidence type="ECO:0000250" key="1">
    <source>
        <dbReference type="UniProtKB" id="Q8N9U0"/>
    </source>
</evidence>
<evidence type="ECO:0000255" key="2">
    <source>
        <dbReference type="PROSITE-ProRule" id="PRU00041"/>
    </source>
</evidence>
<evidence type="ECO:0000256" key="3">
    <source>
        <dbReference type="SAM" id="MobiDB-lite"/>
    </source>
</evidence>
<evidence type="ECO:0000269" key="4">
    <source>
    </source>
</evidence>
<evidence type="ECO:0000305" key="5"/>
<proteinExistence type="evidence at protein level"/>
<keyword id="KW-0539">Nucleus</keyword>
<keyword id="KW-0597">Phosphoprotein</keyword>
<keyword id="KW-1185">Reference proteome</keyword>
<keyword id="KW-0677">Repeat</keyword>
<comment type="subcellular location">
    <subcellularLocation>
        <location evidence="4">Nucleus</location>
    </subcellularLocation>
</comment>
<accession>Q91XT6</accession>
<accession>Q3UW74</accession>
<accession>Q9D4A0</accession>
<feature type="chain" id="PRO_0000072415" description="Tandem C2 domains nuclear protein">
    <location>
        <begin position="1"/>
        <end position="489"/>
    </location>
</feature>
<feature type="domain" description="C2 1" evidence="2">
    <location>
        <begin position="222"/>
        <end position="341"/>
    </location>
</feature>
<feature type="domain" description="C2 2" evidence="2">
    <location>
        <begin position="343"/>
        <end position="470"/>
    </location>
</feature>
<feature type="region of interest" description="Disordered" evidence="3">
    <location>
        <begin position="189"/>
        <end position="214"/>
    </location>
</feature>
<feature type="short sequence motif" description="Nuclear localization signal">
    <location>
        <begin position="446"/>
        <end position="448"/>
    </location>
</feature>
<feature type="compositionally biased region" description="Low complexity" evidence="3">
    <location>
        <begin position="191"/>
        <end position="210"/>
    </location>
</feature>
<feature type="modified residue" description="Phosphoserine" evidence="1">
    <location>
        <position position="82"/>
    </location>
</feature>
<feature type="modified residue" description="Phosphoserine" evidence="1">
    <location>
        <position position="155"/>
    </location>
</feature>
<feature type="modified residue" description="Phosphoserine" evidence="1">
    <location>
        <position position="167"/>
    </location>
</feature>
<feature type="modified residue" description="Phosphoserine" evidence="1">
    <location>
        <position position="173"/>
    </location>
</feature>
<feature type="modified residue" description="Phosphoserine" evidence="1">
    <location>
        <position position="210"/>
    </location>
</feature>
<feature type="modified residue" description="Phosphothreonine" evidence="1">
    <location>
        <position position="213"/>
    </location>
</feature>
<feature type="modified residue" description="Phosphothreonine" evidence="1">
    <location>
        <position position="215"/>
    </location>
</feature>
<feature type="modified residue" description="Phosphoserine" evidence="1">
    <location>
        <position position="217"/>
    </location>
</feature>
<feature type="mutagenesis site" description="Abolishes nuclear localization." evidence="4">
    <original>RRK</original>
    <variation>QQQ</variation>
    <location>
        <begin position="446"/>
        <end position="448"/>
    </location>
</feature>
<feature type="sequence conflict" description="In Ref. 1; BAB62893." evidence="5" ref="1">
    <original>S</original>
    <variation>N</variation>
    <location>
        <position position="35"/>
    </location>
</feature>
<reference key="1">
    <citation type="journal article" date="2001" name="FEBS Lett.">
        <title>Tac2-N, an atypical C-type tandem C2 protein localized in the nucleus.</title>
        <authorList>
            <person name="Fukuda M."/>
            <person name="Mikoshiba K."/>
        </authorList>
    </citation>
    <scope>NUCLEOTIDE SEQUENCE [MRNA]</scope>
    <scope>SUBCELLULAR LOCATION</scope>
    <scope>MUTAGENESIS OF 446-LYS--LYS-448</scope>
    <source>
        <strain>BALB/cJ</strain>
        <tissue>Brain</tissue>
    </source>
</reference>
<reference key="2">
    <citation type="journal article" date="2005" name="Science">
        <title>The transcriptional landscape of the mammalian genome.</title>
        <authorList>
            <person name="Carninci P."/>
            <person name="Kasukawa T."/>
            <person name="Katayama S."/>
            <person name="Gough J."/>
            <person name="Frith M.C."/>
            <person name="Maeda N."/>
            <person name="Oyama R."/>
            <person name="Ravasi T."/>
            <person name="Lenhard B."/>
            <person name="Wells C."/>
            <person name="Kodzius R."/>
            <person name="Shimokawa K."/>
            <person name="Bajic V.B."/>
            <person name="Brenner S.E."/>
            <person name="Batalov S."/>
            <person name="Forrest A.R."/>
            <person name="Zavolan M."/>
            <person name="Davis M.J."/>
            <person name="Wilming L.G."/>
            <person name="Aidinis V."/>
            <person name="Allen J.E."/>
            <person name="Ambesi-Impiombato A."/>
            <person name="Apweiler R."/>
            <person name="Aturaliya R.N."/>
            <person name="Bailey T.L."/>
            <person name="Bansal M."/>
            <person name="Baxter L."/>
            <person name="Beisel K.W."/>
            <person name="Bersano T."/>
            <person name="Bono H."/>
            <person name="Chalk A.M."/>
            <person name="Chiu K.P."/>
            <person name="Choudhary V."/>
            <person name="Christoffels A."/>
            <person name="Clutterbuck D.R."/>
            <person name="Crowe M.L."/>
            <person name="Dalla E."/>
            <person name="Dalrymple B.P."/>
            <person name="de Bono B."/>
            <person name="Della Gatta G."/>
            <person name="di Bernardo D."/>
            <person name="Down T."/>
            <person name="Engstrom P."/>
            <person name="Fagiolini M."/>
            <person name="Faulkner G."/>
            <person name="Fletcher C.F."/>
            <person name="Fukushima T."/>
            <person name="Furuno M."/>
            <person name="Futaki S."/>
            <person name="Gariboldi M."/>
            <person name="Georgii-Hemming P."/>
            <person name="Gingeras T.R."/>
            <person name="Gojobori T."/>
            <person name="Green R.E."/>
            <person name="Gustincich S."/>
            <person name="Harbers M."/>
            <person name="Hayashi Y."/>
            <person name="Hensch T.K."/>
            <person name="Hirokawa N."/>
            <person name="Hill D."/>
            <person name="Huminiecki L."/>
            <person name="Iacono M."/>
            <person name="Ikeo K."/>
            <person name="Iwama A."/>
            <person name="Ishikawa T."/>
            <person name="Jakt M."/>
            <person name="Kanapin A."/>
            <person name="Katoh M."/>
            <person name="Kawasawa Y."/>
            <person name="Kelso J."/>
            <person name="Kitamura H."/>
            <person name="Kitano H."/>
            <person name="Kollias G."/>
            <person name="Krishnan S.P."/>
            <person name="Kruger A."/>
            <person name="Kummerfeld S.K."/>
            <person name="Kurochkin I.V."/>
            <person name="Lareau L.F."/>
            <person name="Lazarevic D."/>
            <person name="Lipovich L."/>
            <person name="Liu J."/>
            <person name="Liuni S."/>
            <person name="McWilliam S."/>
            <person name="Madan Babu M."/>
            <person name="Madera M."/>
            <person name="Marchionni L."/>
            <person name="Matsuda H."/>
            <person name="Matsuzawa S."/>
            <person name="Miki H."/>
            <person name="Mignone F."/>
            <person name="Miyake S."/>
            <person name="Morris K."/>
            <person name="Mottagui-Tabar S."/>
            <person name="Mulder N."/>
            <person name="Nakano N."/>
            <person name="Nakauchi H."/>
            <person name="Ng P."/>
            <person name="Nilsson R."/>
            <person name="Nishiguchi S."/>
            <person name="Nishikawa S."/>
            <person name="Nori F."/>
            <person name="Ohara O."/>
            <person name="Okazaki Y."/>
            <person name="Orlando V."/>
            <person name="Pang K.C."/>
            <person name="Pavan W.J."/>
            <person name="Pavesi G."/>
            <person name="Pesole G."/>
            <person name="Petrovsky N."/>
            <person name="Piazza S."/>
            <person name="Reed J."/>
            <person name="Reid J.F."/>
            <person name="Ring B.Z."/>
            <person name="Ringwald M."/>
            <person name="Rost B."/>
            <person name="Ruan Y."/>
            <person name="Salzberg S.L."/>
            <person name="Sandelin A."/>
            <person name="Schneider C."/>
            <person name="Schoenbach C."/>
            <person name="Sekiguchi K."/>
            <person name="Semple C.A."/>
            <person name="Seno S."/>
            <person name="Sessa L."/>
            <person name="Sheng Y."/>
            <person name="Shibata Y."/>
            <person name="Shimada H."/>
            <person name="Shimada K."/>
            <person name="Silva D."/>
            <person name="Sinclair B."/>
            <person name="Sperling S."/>
            <person name="Stupka E."/>
            <person name="Sugiura K."/>
            <person name="Sultana R."/>
            <person name="Takenaka Y."/>
            <person name="Taki K."/>
            <person name="Tammoja K."/>
            <person name="Tan S.L."/>
            <person name="Tang S."/>
            <person name="Taylor M.S."/>
            <person name="Tegner J."/>
            <person name="Teichmann S.A."/>
            <person name="Ueda H.R."/>
            <person name="van Nimwegen E."/>
            <person name="Verardo R."/>
            <person name="Wei C.L."/>
            <person name="Yagi K."/>
            <person name="Yamanishi H."/>
            <person name="Zabarovsky E."/>
            <person name="Zhu S."/>
            <person name="Zimmer A."/>
            <person name="Hide W."/>
            <person name="Bult C."/>
            <person name="Grimmond S.M."/>
            <person name="Teasdale R.D."/>
            <person name="Liu E.T."/>
            <person name="Brusic V."/>
            <person name="Quackenbush J."/>
            <person name="Wahlestedt C."/>
            <person name="Mattick J.S."/>
            <person name="Hume D.A."/>
            <person name="Kai C."/>
            <person name="Sasaki D."/>
            <person name="Tomaru Y."/>
            <person name="Fukuda S."/>
            <person name="Kanamori-Katayama M."/>
            <person name="Suzuki M."/>
            <person name="Aoki J."/>
            <person name="Arakawa T."/>
            <person name="Iida J."/>
            <person name="Imamura K."/>
            <person name="Itoh M."/>
            <person name="Kato T."/>
            <person name="Kawaji H."/>
            <person name="Kawagashira N."/>
            <person name="Kawashima T."/>
            <person name="Kojima M."/>
            <person name="Kondo S."/>
            <person name="Konno H."/>
            <person name="Nakano K."/>
            <person name="Ninomiya N."/>
            <person name="Nishio T."/>
            <person name="Okada M."/>
            <person name="Plessy C."/>
            <person name="Shibata K."/>
            <person name="Shiraki T."/>
            <person name="Suzuki S."/>
            <person name="Tagami M."/>
            <person name="Waki K."/>
            <person name="Watahiki A."/>
            <person name="Okamura-Oho Y."/>
            <person name="Suzuki H."/>
            <person name="Kawai J."/>
            <person name="Hayashizaki Y."/>
        </authorList>
    </citation>
    <scope>NUCLEOTIDE SEQUENCE [LARGE SCALE MRNA]</scope>
    <source>
        <strain>C57BL/6J</strain>
        <tissue>Cecum</tissue>
        <tissue>Testis</tissue>
    </source>
</reference>
<reference key="3">
    <citation type="submission" date="2005-09" db="EMBL/GenBank/DDBJ databases">
        <authorList>
            <person name="Mural R.J."/>
            <person name="Adams M.D."/>
            <person name="Myers E.W."/>
            <person name="Smith H.O."/>
            <person name="Venter J.C."/>
        </authorList>
    </citation>
    <scope>NUCLEOTIDE SEQUENCE [LARGE SCALE GENOMIC DNA]</scope>
</reference>
<reference key="4">
    <citation type="journal article" date="2004" name="Genome Res.">
        <title>The status, quality, and expansion of the NIH full-length cDNA project: the Mammalian Gene Collection (MGC).</title>
        <authorList>
            <consortium name="The MGC Project Team"/>
        </authorList>
    </citation>
    <scope>NUCLEOTIDE SEQUENCE [LARGE SCALE MRNA]</scope>
    <source>
        <tissue>Testis</tissue>
    </source>
</reference>